<comment type="function">
    <text evidence="1">Pyridoxal 5'-phosphate (PLP)-binding protein, which is involved in PLP homeostasis.</text>
</comment>
<comment type="similarity">
    <text evidence="1">Belongs to the pyridoxal phosphate-binding protein YggS/PROSC family.</text>
</comment>
<dbReference type="EMBL" id="AE000511">
    <property type="protein sequence ID" value="AAD07459.1"/>
    <property type="molecule type" value="Genomic_DNA"/>
</dbReference>
<dbReference type="PIR" id="C64569">
    <property type="entry name" value="C64569"/>
</dbReference>
<dbReference type="RefSeq" id="NP_207193.1">
    <property type="nucleotide sequence ID" value="NC_000915.1"/>
</dbReference>
<dbReference type="RefSeq" id="WP_000888213.1">
    <property type="nucleotide sequence ID" value="NC_018939.1"/>
</dbReference>
<dbReference type="SMR" id="O25156"/>
<dbReference type="FunCoup" id="O25156">
    <property type="interactions" value="332"/>
</dbReference>
<dbReference type="STRING" id="85962.HP_0395"/>
<dbReference type="PaxDb" id="85962-C694_02005"/>
<dbReference type="EnsemblBacteria" id="AAD07459">
    <property type="protein sequence ID" value="AAD07459"/>
    <property type="gene ID" value="HP_0395"/>
</dbReference>
<dbReference type="KEGG" id="heo:C694_02005"/>
<dbReference type="KEGG" id="hpy:HP_0395"/>
<dbReference type="PATRIC" id="fig|85962.47.peg.419"/>
<dbReference type="eggNOG" id="COG0325">
    <property type="taxonomic scope" value="Bacteria"/>
</dbReference>
<dbReference type="InParanoid" id="O25156"/>
<dbReference type="OrthoDB" id="9804072at2"/>
<dbReference type="PhylomeDB" id="O25156"/>
<dbReference type="Proteomes" id="UP000000429">
    <property type="component" value="Chromosome"/>
</dbReference>
<dbReference type="GO" id="GO:0005737">
    <property type="term" value="C:cytoplasm"/>
    <property type="evidence" value="ECO:0000318"/>
    <property type="project" value="GO_Central"/>
</dbReference>
<dbReference type="GO" id="GO:0030170">
    <property type="term" value="F:pyridoxal phosphate binding"/>
    <property type="evidence" value="ECO:0000318"/>
    <property type="project" value="GO_Central"/>
</dbReference>
<dbReference type="CDD" id="cd00635">
    <property type="entry name" value="PLPDE_III_YBL036c_like"/>
    <property type="match status" value="1"/>
</dbReference>
<dbReference type="FunFam" id="3.20.20.10:FF:000018">
    <property type="entry name" value="Pyridoxal phosphate homeostasis protein"/>
    <property type="match status" value="1"/>
</dbReference>
<dbReference type="Gene3D" id="3.20.20.10">
    <property type="entry name" value="Alanine racemase"/>
    <property type="match status" value="1"/>
</dbReference>
<dbReference type="HAMAP" id="MF_02087">
    <property type="entry name" value="PLP_homeostasis"/>
    <property type="match status" value="1"/>
</dbReference>
<dbReference type="InterPro" id="IPR001608">
    <property type="entry name" value="Ala_racemase_N"/>
</dbReference>
<dbReference type="InterPro" id="IPR029066">
    <property type="entry name" value="PLP-binding_barrel"/>
</dbReference>
<dbReference type="InterPro" id="IPR011078">
    <property type="entry name" value="PyrdxlP_homeostasis"/>
</dbReference>
<dbReference type="NCBIfam" id="TIGR00044">
    <property type="entry name" value="YggS family pyridoxal phosphate-dependent enzyme"/>
    <property type="match status" value="1"/>
</dbReference>
<dbReference type="PANTHER" id="PTHR10146">
    <property type="entry name" value="PROLINE SYNTHETASE CO-TRANSCRIBED BACTERIAL HOMOLOG PROTEIN"/>
    <property type="match status" value="1"/>
</dbReference>
<dbReference type="PANTHER" id="PTHR10146:SF14">
    <property type="entry name" value="PYRIDOXAL PHOSPHATE HOMEOSTASIS PROTEIN"/>
    <property type="match status" value="1"/>
</dbReference>
<dbReference type="Pfam" id="PF01168">
    <property type="entry name" value="Ala_racemase_N"/>
    <property type="match status" value="1"/>
</dbReference>
<dbReference type="PIRSF" id="PIRSF004848">
    <property type="entry name" value="YBL036c_PLPDEIII"/>
    <property type="match status" value="1"/>
</dbReference>
<dbReference type="SUPFAM" id="SSF51419">
    <property type="entry name" value="PLP-binding barrel"/>
    <property type="match status" value="1"/>
</dbReference>
<dbReference type="PROSITE" id="PS01211">
    <property type="entry name" value="UPF0001"/>
    <property type="match status" value="1"/>
</dbReference>
<protein>
    <recommendedName>
        <fullName evidence="1">Pyridoxal phosphate homeostasis protein</fullName>
        <shortName evidence="1">PLP homeostasis protein</shortName>
    </recommendedName>
</protein>
<name>PLPHP_HELPY</name>
<organism>
    <name type="scientific">Helicobacter pylori (strain ATCC 700392 / 26695)</name>
    <name type="common">Campylobacter pylori</name>
    <dbReference type="NCBI Taxonomy" id="85962"/>
    <lineage>
        <taxon>Bacteria</taxon>
        <taxon>Pseudomonadati</taxon>
        <taxon>Campylobacterota</taxon>
        <taxon>Epsilonproteobacteria</taxon>
        <taxon>Campylobacterales</taxon>
        <taxon>Helicobacteraceae</taxon>
        <taxon>Helicobacter</taxon>
    </lineage>
</organism>
<sequence>MLDYRQKIDALITKIEKARTAYSRHHIVKIVAVSKNASPEAIQHYYNCSQRAFGENKVQDLKTKMHSLEHLPLEWHMIGSLQENKINALLSLKPALLHSLDSLKLALKIEKRCEILGVNLNALLQVNSAYEESKSGVVPEEALEIYSQISETCKHLKLKGLMCIGAHTDDEKEIEKSFITTKKLFDQIKNASVLSMGMSDDFELAIACGANLLRIGSFLFKE</sequence>
<reference key="1">
    <citation type="journal article" date="1997" name="Nature">
        <title>The complete genome sequence of the gastric pathogen Helicobacter pylori.</title>
        <authorList>
            <person name="Tomb J.-F."/>
            <person name="White O."/>
            <person name="Kerlavage A.R."/>
            <person name="Clayton R.A."/>
            <person name="Sutton G.G."/>
            <person name="Fleischmann R.D."/>
            <person name="Ketchum K.A."/>
            <person name="Klenk H.-P."/>
            <person name="Gill S.R."/>
            <person name="Dougherty B.A."/>
            <person name="Nelson K.E."/>
            <person name="Quackenbush J."/>
            <person name="Zhou L."/>
            <person name="Kirkness E.F."/>
            <person name="Peterson S.N."/>
            <person name="Loftus B.J."/>
            <person name="Richardson D.L."/>
            <person name="Dodson R.J."/>
            <person name="Khalak H.G."/>
            <person name="Glodek A."/>
            <person name="McKenney K."/>
            <person name="FitzGerald L.M."/>
            <person name="Lee N."/>
            <person name="Adams M.D."/>
            <person name="Hickey E.K."/>
            <person name="Berg D.E."/>
            <person name="Gocayne J.D."/>
            <person name="Utterback T.R."/>
            <person name="Peterson J.D."/>
            <person name="Kelley J.M."/>
            <person name="Cotton M.D."/>
            <person name="Weidman J.F."/>
            <person name="Fujii C."/>
            <person name="Bowman C."/>
            <person name="Watthey L."/>
            <person name="Wallin E."/>
            <person name="Hayes W.S."/>
            <person name="Borodovsky M."/>
            <person name="Karp P.D."/>
            <person name="Smith H.O."/>
            <person name="Fraser C.M."/>
            <person name="Venter J.C."/>
        </authorList>
    </citation>
    <scope>NUCLEOTIDE SEQUENCE [LARGE SCALE GENOMIC DNA]</scope>
    <source>
        <strain>ATCC 700392 / 26695</strain>
    </source>
</reference>
<proteinExistence type="inferred from homology"/>
<gene>
    <name type="ordered locus">HP_0395</name>
</gene>
<feature type="chain" id="PRO_0000163200" description="Pyridoxal phosphate homeostasis protein">
    <location>
        <begin position="1"/>
        <end position="222"/>
    </location>
</feature>
<feature type="modified residue" description="N6-(pyridoxal phosphate)lysine" evidence="1">
    <location>
        <position position="35"/>
    </location>
</feature>
<accession>O25156</accession>
<evidence type="ECO:0000255" key="1">
    <source>
        <dbReference type="HAMAP-Rule" id="MF_02087"/>
    </source>
</evidence>
<keyword id="KW-0663">Pyridoxal phosphate</keyword>
<keyword id="KW-1185">Reference proteome</keyword>